<organism>
    <name type="scientific">Xanthomonas euvesicatoria pv. vesicatoria (strain 85-10)</name>
    <name type="common">Xanthomonas campestris pv. vesicatoria</name>
    <dbReference type="NCBI Taxonomy" id="316273"/>
    <lineage>
        <taxon>Bacteria</taxon>
        <taxon>Pseudomonadati</taxon>
        <taxon>Pseudomonadota</taxon>
        <taxon>Gammaproteobacteria</taxon>
        <taxon>Lysobacterales</taxon>
        <taxon>Lysobacteraceae</taxon>
        <taxon>Xanthomonas</taxon>
    </lineage>
</organism>
<proteinExistence type="inferred from homology"/>
<comment type="function">
    <text evidence="1">Specifically methylates the N7 position of guanine in position 527 of 16S rRNA.</text>
</comment>
<comment type="catalytic activity">
    <reaction evidence="1">
        <text>guanosine(527) in 16S rRNA + S-adenosyl-L-methionine = N(7)-methylguanosine(527) in 16S rRNA + S-adenosyl-L-homocysteine</text>
        <dbReference type="Rhea" id="RHEA:42732"/>
        <dbReference type="Rhea" id="RHEA-COMP:10209"/>
        <dbReference type="Rhea" id="RHEA-COMP:10210"/>
        <dbReference type="ChEBI" id="CHEBI:57856"/>
        <dbReference type="ChEBI" id="CHEBI:59789"/>
        <dbReference type="ChEBI" id="CHEBI:74269"/>
        <dbReference type="ChEBI" id="CHEBI:74480"/>
        <dbReference type="EC" id="2.1.1.170"/>
    </reaction>
</comment>
<comment type="subcellular location">
    <subcellularLocation>
        <location evidence="1">Cytoplasm</location>
    </subcellularLocation>
</comment>
<comment type="similarity">
    <text evidence="1">Belongs to the methyltransferase superfamily. RNA methyltransferase RsmG family.</text>
</comment>
<reference key="1">
    <citation type="journal article" date="2005" name="J. Bacteriol.">
        <title>Insights into genome plasticity and pathogenicity of the plant pathogenic Bacterium Xanthomonas campestris pv. vesicatoria revealed by the complete genome sequence.</title>
        <authorList>
            <person name="Thieme F."/>
            <person name="Koebnik R."/>
            <person name="Bekel T."/>
            <person name="Berger C."/>
            <person name="Boch J."/>
            <person name="Buettner D."/>
            <person name="Caldana C."/>
            <person name="Gaigalat L."/>
            <person name="Goesmann A."/>
            <person name="Kay S."/>
            <person name="Kirchner O."/>
            <person name="Lanz C."/>
            <person name="Linke B."/>
            <person name="McHardy A.C."/>
            <person name="Meyer F."/>
            <person name="Mittenhuber G."/>
            <person name="Nies D.H."/>
            <person name="Niesbach-Kloesgen U."/>
            <person name="Patschkowski T."/>
            <person name="Rueckert C."/>
            <person name="Rupp O."/>
            <person name="Schneiker S."/>
            <person name="Schuster S.C."/>
            <person name="Vorhoelter F.J."/>
            <person name="Weber E."/>
            <person name="Puehler A."/>
            <person name="Bonas U."/>
            <person name="Bartels D."/>
            <person name="Kaiser O."/>
        </authorList>
    </citation>
    <scope>NUCLEOTIDE SEQUENCE [LARGE SCALE GENOMIC DNA]</scope>
    <source>
        <strain>85-10</strain>
    </source>
</reference>
<accession>Q3BML8</accession>
<protein>
    <recommendedName>
        <fullName evidence="1">Ribosomal RNA small subunit methyltransferase G</fullName>
        <ecNumber evidence="1">2.1.1.170</ecNumber>
    </recommendedName>
    <alternativeName>
        <fullName evidence="1">16S rRNA 7-methylguanosine methyltransferase</fullName>
        <shortName evidence="1">16S rRNA m7G methyltransferase</shortName>
    </alternativeName>
</protein>
<gene>
    <name evidence="1" type="primary">rsmG</name>
    <name type="ordered locus">XCV4264</name>
</gene>
<dbReference type="EC" id="2.1.1.170" evidence="1"/>
<dbReference type="EMBL" id="AM039952">
    <property type="protein sequence ID" value="CAJ25995.1"/>
    <property type="molecule type" value="Genomic_DNA"/>
</dbReference>
<dbReference type="RefSeq" id="WP_008575964.1">
    <property type="nucleotide sequence ID" value="NZ_CP017190.1"/>
</dbReference>
<dbReference type="SMR" id="Q3BML8"/>
<dbReference type="STRING" id="456327.BJD11_24075"/>
<dbReference type="GeneID" id="63993316"/>
<dbReference type="KEGG" id="xcv:XCV4264"/>
<dbReference type="eggNOG" id="COG0357">
    <property type="taxonomic scope" value="Bacteria"/>
</dbReference>
<dbReference type="HOGENOM" id="CLU_065341_2_0_6"/>
<dbReference type="Proteomes" id="UP000007069">
    <property type="component" value="Chromosome"/>
</dbReference>
<dbReference type="GO" id="GO:0005829">
    <property type="term" value="C:cytosol"/>
    <property type="evidence" value="ECO:0007669"/>
    <property type="project" value="TreeGrafter"/>
</dbReference>
<dbReference type="GO" id="GO:0070043">
    <property type="term" value="F:rRNA (guanine-N7-)-methyltransferase activity"/>
    <property type="evidence" value="ECO:0007669"/>
    <property type="project" value="UniProtKB-UniRule"/>
</dbReference>
<dbReference type="CDD" id="cd02440">
    <property type="entry name" value="AdoMet_MTases"/>
    <property type="match status" value="1"/>
</dbReference>
<dbReference type="Gene3D" id="3.40.50.150">
    <property type="entry name" value="Vaccinia Virus protein VP39"/>
    <property type="match status" value="1"/>
</dbReference>
<dbReference type="HAMAP" id="MF_00074">
    <property type="entry name" value="16SrRNA_methyltr_G"/>
    <property type="match status" value="1"/>
</dbReference>
<dbReference type="InterPro" id="IPR003682">
    <property type="entry name" value="rRNA_ssu_MeTfrase_G"/>
</dbReference>
<dbReference type="InterPro" id="IPR029063">
    <property type="entry name" value="SAM-dependent_MTases_sf"/>
</dbReference>
<dbReference type="NCBIfam" id="TIGR00138">
    <property type="entry name" value="rsmG_gidB"/>
    <property type="match status" value="1"/>
</dbReference>
<dbReference type="PANTHER" id="PTHR31760">
    <property type="entry name" value="S-ADENOSYL-L-METHIONINE-DEPENDENT METHYLTRANSFERASES SUPERFAMILY PROTEIN"/>
    <property type="match status" value="1"/>
</dbReference>
<dbReference type="PANTHER" id="PTHR31760:SF0">
    <property type="entry name" value="S-ADENOSYL-L-METHIONINE-DEPENDENT METHYLTRANSFERASES SUPERFAMILY PROTEIN"/>
    <property type="match status" value="1"/>
</dbReference>
<dbReference type="Pfam" id="PF02527">
    <property type="entry name" value="GidB"/>
    <property type="match status" value="1"/>
</dbReference>
<dbReference type="PIRSF" id="PIRSF003078">
    <property type="entry name" value="GidB"/>
    <property type="match status" value="1"/>
</dbReference>
<dbReference type="SUPFAM" id="SSF53335">
    <property type="entry name" value="S-adenosyl-L-methionine-dependent methyltransferases"/>
    <property type="match status" value="1"/>
</dbReference>
<sequence>MNDAALAPDVSAALERGLQAQSLDAAFAAPLLRYLALLVRWNKTYNLTAVRDPREMVTRHLLDSLAMQPYIASGTLADLGTGPGLPGIPLAITRPQLQVTLVESNGKKARFMREALRHLELGNARVAESRAEALDEPAAYDHLTARALDTLAGIIAVGGHLLRPGGSLLAMKGVYPHEEIAALPAGWTVGEVHPLQVPGLEGERHLVVVRKG</sequence>
<feature type="chain" id="PRO_1000010235" description="Ribosomal RNA small subunit methyltransferase G">
    <location>
        <begin position="1"/>
        <end position="212"/>
    </location>
</feature>
<feature type="binding site" evidence="1">
    <location>
        <position position="80"/>
    </location>
    <ligand>
        <name>S-adenosyl-L-methionine</name>
        <dbReference type="ChEBI" id="CHEBI:59789"/>
    </ligand>
</feature>
<feature type="binding site" evidence="1">
    <location>
        <position position="85"/>
    </location>
    <ligand>
        <name>S-adenosyl-L-methionine</name>
        <dbReference type="ChEBI" id="CHEBI:59789"/>
    </ligand>
</feature>
<feature type="binding site" evidence="1">
    <location>
        <begin position="131"/>
        <end position="132"/>
    </location>
    <ligand>
        <name>S-adenosyl-L-methionine</name>
        <dbReference type="ChEBI" id="CHEBI:59789"/>
    </ligand>
</feature>
<feature type="binding site" evidence="1">
    <location>
        <position position="146"/>
    </location>
    <ligand>
        <name>S-adenosyl-L-methionine</name>
        <dbReference type="ChEBI" id="CHEBI:59789"/>
    </ligand>
</feature>
<evidence type="ECO:0000255" key="1">
    <source>
        <dbReference type="HAMAP-Rule" id="MF_00074"/>
    </source>
</evidence>
<keyword id="KW-0963">Cytoplasm</keyword>
<keyword id="KW-0489">Methyltransferase</keyword>
<keyword id="KW-0698">rRNA processing</keyword>
<keyword id="KW-0949">S-adenosyl-L-methionine</keyword>
<keyword id="KW-0808">Transferase</keyword>
<name>RSMG_XANE5</name>